<feature type="chain" id="PRO_0000412006" description="CASP-like protein 2B1">
    <location>
        <begin position="1"/>
        <end position="182"/>
    </location>
</feature>
<feature type="topological domain" description="Cytoplasmic" evidence="2">
    <location>
        <begin position="1"/>
        <end position="12"/>
    </location>
</feature>
<feature type="transmembrane region" description="Helical" evidence="2">
    <location>
        <begin position="13"/>
        <end position="31"/>
    </location>
</feature>
<feature type="topological domain" description="Extracellular" evidence="2">
    <location>
        <begin position="32"/>
        <end position="52"/>
    </location>
</feature>
<feature type="transmembrane region" description="Helical" evidence="2">
    <location>
        <begin position="53"/>
        <end position="73"/>
    </location>
</feature>
<feature type="topological domain" description="Cytoplasmic" evidence="2">
    <location>
        <begin position="74"/>
        <end position="89"/>
    </location>
</feature>
<feature type="transmembrane region" description="Helical" evidence="2">
    <location>
        <begin position="90"/>
        <end position="110"/>
    </location>
</feature>
<feature type="topological domain" description="Extracellular" evidence="2">
    <location>
        <begin position="111"/>
        <end position="141"/>
    </location>
</feature>
<feature type="transmembrane region" description="Helical" evidence="2">
    <location>
        <begin position="142"/>
        <end position="162"/>
    </location>
</feature>
<feature type="topological domain" description="Cytoplasmic" evidence="2">
    <location>
        <begin position="163"/>
        <end position="182"/>
    </location>
</feature>
<keyword id="KW-1003">Cell membrane</keyword>
<keyword id="KW-0472">Membrane</keyword>
<keyword id="KW-1185">Reference proteome</keyword>
<keyword id="KW-0812">Transmembrane</keyword>
<keyword id="KW-1133">Transmembrane helix</keyword>
<dbReference type="EMBL" id="GL348719">
    <property type="protein sequence ID" value="EFH44392.1"/>
    <property type="molecule type" value="Genomic_DNA"/>
</dbReference>
<dbReference type="SMR" id="D7M9V1"/>
<dbReference type="STRING" id="81972.D7M9V1"/>
<dbReference type="EnsemblPlants" id="scaffold_702849.1">
    <property type="protein sequence ID" value="scaffold_702849.1"/>
    <property type="gene ID" value="scaffold_702849.1"/>
</dbReference>
<dbReference type="Gramene" id="scaffold_702849.1">
    <property type="protein sequence ID" value="scaffold_702849.1"/>
    <property type="gene ID" value="scaffold_702849.1"/>
</dbReference>
<dbReference type="KEGG" id="aly:9304205"/>
<dbReference type="eggNOG" id="ENOG502QQH2">
    <property type="taxonomic scope" value="Eukaryota"/>
</dbReference>
<dbReference type="HOGENOM" id="CLU_066104_0_1_1"/>
<dbReference type="OrthoDB" id="689701at2759"/>
<dbReference type="Proteomes" id="UP000008694">
    <property type="component" value="Unassembled WGS sequence"/>
</dbReference>
<dbReference type="GO" id="GO:0005886">
    <property type="term" value="C:plasma membrane"/>
    <property type="evidence" value="ECO:0007669"/>
    <property type="project" value="UniProtKB-SubCell"/>
</dbReference>
<dbReference type="InterPro" id="IPR006459">
    <property type="entry name" value="CASP/CASPL"/>
</dbReference>
<dbReference type="InterPro" id="IPR006702">
    <property type="entry name" value="CASP_dom"/>
</dbReference>
<dbReference type="NCBIfam" id="TIGR01569">
    <property type="entry name" value="A_tha_TIGR01569"/>
    <property type="match status" value="1"/>
</dbReference>
<dbReference type="PANTHER" id="PTHR33573:SF64">
    <property type="entry name" value="CASP-LIKE PROTEIN 2B1"/>
    <property type="match status" value="1"/>
</dbReference>
<dbReference type="PANTHER" id="PTHR33573">
    <property type="entry name" value="CASP-LIKE PROTEIN 4A4"/>
    <property type="match status" value="1"/>
</dbReference>
<dbReference type="Pfam" id="PF04535">
    <property type="entry name" value="CASP_dom"/>
    <property type="match status" value="1"/>
</dbReference>
<comment type="subunit">
    <text evidence="1">Homodimer and heterodimers.</text>
</comment>
<comment type="subcellular location">
    <subcellularLocation>
        <location evidence="1">Cell membrane</location>
        <topology evidence="1">Multi-pass membrane protein</topology>
    </subcellularLocation>
</comment>
<comment type="similarity">
    <text evidence="3">Belongs to the Casparian strip membrane proteins (CASP) family.</text>
</comment>
<name>CSPL7_ARALL</name>
<proteinExistence type="inferred from homology"/>
<evidence type="ECO:0000250" key="1"/>
<evidence type="ECO:0000255" key="2"/>
<evidence type="ECO:0000305" key="3"/>
<accession>D7M9V1</accession>
<organism>
    <name type="scientific">Arabidopsis lyrata subsp. lyrata</name>
    <name type="common">Lyre-leaved rock-cress</name>
    <dbReference type="NCBI Taxonomy" id="81972"/>
    <lineage>
        <taxon>Eukaryota</taxon>
        <taxon>Viridiplantae</taxon>
        <taxon>Streptophyta</taxon>
        <taxon>Embryophyta</taxon>
        <taxon>Tracheophyta</taxon>
        <taxon>Spermatophyta</taxon>
        <taxon>Magnoliopsida</taxon>
        <taxon>eudicotyledons</taxon>
        <taxon>Gunneridae</taxon>
        <taxon>Pentapetalae</taxon>
        <taxon>rosids</taxon>
        <taxon>malvids</taxon>
        <taxon>Brassicales</taxon>
        <taxon>Brassicaceae</taxon>
        <taxon>Camelineae</taxon>
        <taxon>Arabidopsis</taxon>
    </lineage>
</organism>
<protein>
    <recommendedName>
        <fullName>CASP-like protein 2B1</fullName>
        <shortName>AlCASPL2B1</shortName>
    </recommendedName>
</protein>
<reference key="1">
    <citation type="journal article" date="2011" name="Nat. Genet.">
        <title>The Arabidopsis lyrata genome sequence and the basis of rapid genome size change.</title>
        <authorList>
            <person name="Hu T.T."/>
            <person name="Pattyn P."/>
            <person name="Bakker E.G."/>
            <person name="Cao J."/>
            <person name="Cheng J.-F."/>
            <person name="Clark R.M."/>
            <person name="Fahlgren N."/>
            <person name="Fawcett J.A."/>
            <person name="Grimwood J."/>
            <person name="Gundlach H."/>
            <person name="Haberer G."/>
            <person name="Hollister J.D."/>
            <person name="Ossowski S."/>
            <person name="Ottilar R.P."/>
            <person name="Salamov A.A."/>
            <person name="Schneeberger K."/>
            <person name="Spannagl M."/>
            <person name="Wang X."/>
            <person name="Yang L."/>
            <person name="Nasrallah M.E."/>
            <person name="Bergelson J."/>
            <person name="Carrington J.C."/>
            <person name="Gaut B.S."/>
            <person name="Schmutz J."/>
            <person name="Mayer K.F.X."/>
            <person name="Van de Peer Y."/>
            <person name="Grigoriev I.V."/>
            <person name="Nordborg M."/>
            <person name="Weigel D."/>
            <person name="Guo Y.-L."/>
        </authorList>
    </citation>
    <scope>NUCLEOTIDE SEQUENCE [LARGE SCALE GENOMIC DNA]</scope>
    <source>
        <strain>cv. MN47</strain>
    </source>
</reference>
<reference key="2">
    <citation type="journal article" date="2014" name="Plant Physiol.">
        <title>Functional and evolutionary analysis of the CASPARIAN STRIP MEMBRANE DOMAIN PROTEIN family.</title>
        <authorList>
            <person name="Roppolo D."/>
            <person name="Boeckmann B."/>
            <person name="Pfister A."/>
            <person name="Boutet E."/>
            <person name="Rubio M.C."/>
            <person name="Denervaud-Tendon V."/>
            <person name="Vermeer J.E."/>
            <person name="Gheyselinck J."/>
            <person name="Xenarios I."/>
            <person name="Geldner N."/>
        </authorList>
    </citation>
    <scope>GENE FAMILY</scope>
    <scope>NOMENCLATURE</scope>
</reference>
<gene>
    <name type="ORF">ARALYDRAFT_915107</name>
</gene>
<sequence>MKLIDRRMRLTELLLRCSISVFALLALILVVTDTEVKLIFTIKKTAKYTDMKAVVFLVVANGIAAVYSLLQSVRCVVGTMKGRVLFSKPLAWAFFSGDQAMAYLNVAAIAATAESGVIAREGEEDLQWMRVCNMYGKFCNQMAIGVSSALLASIAMVFVSCISAFSLFRLYGATRDRRTTPW</sequence>